<keyword id="KW-1015">Disulfide bond</keyword>
<keyword id="KW-0325">Glycoprotein</keyword>
<keyword id="KW-0472">Membrane</keyword>
<keyword id="KW-0509">mRNA transport</keyword>
<keyword id="KW-0906">Nuclear pore complex</keyword>
<keyword id="KW-0539">Nucleus</keyword>
<keyword id="KW-0597">Phosphoprotein</keyword>
<keyword id="KW-0653">Protein transport</keyword>
<keyword id="KW-1185">Reference proteome</keyword>
<keyword id="KW-0811">Translocation</keyword>
<keyword id="KW-0813">Transport</keyword>
<reference key="1">
    <citation type="submission" date="2000-11" db="EMBL/GenBank/DDBJ databases">
        <title>The genomic organization, alternative splicing and comparative analysis of the human nucleoporin 155 (NUP155) gene.</title>
        <authorList>
            <person name="Zhang X."/>
            <person name="Li Z."/>
            <person name="Yang H."/>
            <person name="Bolund L."/>
        </authorList>
    </citation>
    <scope>NUCLEOTIDE SEQUENCE [MRNA]</scope>
</reference>
<reference key="2">
    <citation type="journal article" date="2008" name="Cell">
        <title>Mutation in nuclear pore component NUP155 leads to atrial fibrillation and early sudden cardiac death.</title>
        <authorList>
            <person name="Zhang X."/>
            <person name="Chen S."/>
            <person name="Yoo S."/>
            <person name="Chakrabarti S."/>
            <person name="Zhang T."/>
            <person name="Ke T."/>
            <person name="Oberti C."/>
            <person name="Yong S.L."/>
            <person name="Fang F."/>
            <person name="Li L."/>
            <person name="de la Fuente R."/>
            <person name="Wang L."/>
            <person name="Chen Q."/>
            <person name="Wang Q.K."/>
        </authorList>
    </citation>
    <scope>DISRUPTION PHENOTYPE</scope>
    <scope>FUNCTION</scope>
</reference>
<reference key="3">
    <citation type="journal article" date="2010" name="Cell">
        <title>A tissue-specific atlas of mouse protein phosphorylation and expression.</title>
        <authorList>
            <person name="Huttlin E.L."/>
            <person name="Jedrychowski M.P."/>
            <person name="Elias J.E."/>
            <person name="Goswami T."/>
            <person name="Rad R."/>
            <person name="Beausoleil S.A."/>
            <person name="Villen J."/>
            <person name="Haas W."/>
            <person name="Sowa M.E."/>
            <person name="Gygi S.P."/>
        </authorList>
    </citation>
    <scope>IDENTIFICATION BY MASS SPECTROMETRY [LARGE SCALE ANALYSIS]</scope>
    <source>
        <tissue>Brain</tissue>
        <tissue>Brown adipose tissue</tissue>
        <tissue>Heart</tissue>
        <tissue>Kidney</tissue>
        <tissue>Liver</tissue>
        <tissue>Lung</tissue>
        <tissue>Pancreas</tissue>
        <tissue>Spleen</tissue>
        <tissue>Testis</tissue>
    </source>
</reference>
<reference key="4">
    <citation type="journal article" date="2013" name="J. Cell Sci.">
        <title>Intermolecular disulfide bonds between nucleoporins regulate karyopherin-dependent nuclear transport.</title>
        <authorList>
            <person name="Yoshimura S.H."/>
            <person name="Otsuka S."/>
            <person name="Kumeta M."/>
            <person name="Taga M."/>
            <person name="Takeyasu K."/>
        </authorList>
    </citation>
    <scope>DISULFIDE BOND</scope>
</reference>
<comment type="function">
    <text evidence="3 5">Essential component of nuclear pore complex. Could be essessential for embryogenesis. Nucleoporins may be involved both in binding and translocating proteins during nucleocytoplasmic transport.</text>
</comment>
<comment type="subunit">
    <text evidence="2">Interacts with GLE1 and NUP35/NUP53. Able to form a heterotrimer with GLE1 and NUP42 in vitro (By similarity). Forms a complex with NUP35, NUP93, NUP205 and lamin B (By similarity).</text>
</comment>
<comment type="subcellular location">
    <subcellularLocation>
        <location evidence="3">Nucleus</location>
        <location evidence="3">Nuclear pore complex</location>
    </subcellularLocation>
    <subcellularLocation>
        <location evidence="3">Nucleus membrane</location>
        <topology evidence="3">Peripheral membrane protein</topology>
        <orientation evidence="3">Cytoplasmic side</orientation>
    </subcellularLocation>
    <subcellularLocation>
        <location evidence="3">Nucleus membrane</location>
        <topology evidence="3">Peripheral membrane protein</topology>
        <orientation evidence="3">Nucleoplasmic side</orientation>
    </subcellularLocation>
    <text evidence="3">In mitosis, assumes a diffuse cytoplasmic distribution probably as a monomer, before reversing back into a punctate nuclear surface localization at the end of mitosis.</text>
</comment>
<comment type="PTM">
    <text evidence="1">Phosphorylated. Phosphorylation and dephosphorylation may be important for the function of NUP155 and may play a role in the reversible disassembly of the nuclear pore complex during mitosis (By similarity).</text>
</comment>
<comment type="PTM">
    <text>Disulfide-linked to NUP62. The inner channel of the NPC has a different redox environment from the cytoplasm and allows the formation of interchain disulfide bonds between some nucleoporins, the significant increase of these linkages upon oxidative stress reduces the permeability of the NPC.</text>
</comment>
<comment type="disruption phenotype">
    <text evidence="5">Homozygous null mice die before embryonic day 8.5.</text>
</comment>
<comment type="similarity">
    <text evidence="6">Belongs to the non-repetitive/WGA-negative nucleoporin family.</text>
</comment>
<proteinExistence type="evidence at protein level"/>
<evidence type="ECO:0000250" key="1"/>
<evidence type="ECO:0000250" key="2">
    <source>
        <dbReference type="UniProtKB" id="O75694"/>
    </source>
</evidence>
<evidence type="ECO:0000250" key="3">
    <source>
        <dbReference type="UniProtKB" id="P37199"/>
    </source>
</evidence>
<evidence type="ECO:0000256" key="4">
    <source>
        <dbReference type="SAM" id="MobiDB-lite"/>
    </source>
</evidence>
<evidence type="ECO:0000269" key="5">
    <source>
    </source>
</evidence>
<evidence type="ECO:0000305" key="6"/>
<accession>Q99P88</accession>
<organism>
    <name type="scientific">Mus musculus</name>
    <name type="common">Mouse</name>
    <dbReference type="NCBI Taxonomy" id="10090"/>
    <lineage>
        <taxon>Eukaryota</taxon>
        <taxon>Metazoa</taxon>
        <taxon>Chordata</taxon>
        <taxon>Craniata</taxon>
        <taxon>Vertebrata</taxon>
        <taxon>Euteleostomi</taxon>
        <taxon>Mammalia</taxon>
        <taxon>Eutheria</taxon>
        <taxon>Euarchontoglires</taxon>
        <taxon>Glires</taxon>
        <taxon>Rodentia</taxon>
        <taxon>Myomorpha</taxon>
        <taxon>Muroidea</taxon>
        <taxon>Muridae</taxon>
        <taxon>Murinae</taxon>
        <taxon>Mus</taxon>
        <taxon>Mus</taxon>
    </lineage>
</organism>
<name>NU155_MOUSE</name>
<gene>
    <name type="primary">Nup155</name>
</gene>
<feature type="chain" id="PRO_0000204845" description="Nuclear pore complex protein Nup155">
    <location>
        <begin position="1"/>
        <end position="1391"/>
    </location>
</feature>
<feature type="region of interest" description="Disordered" evidence="4">
    <location>
        <begin position="604"/>
        <end position="630"/>
    </location>
</feature>
<feature type="region of interest" description="Disordered" evidence="4">
    <location>
        <begin position="985"/>
        <end position="1012"/>
    </location>
</feature>
<feature type="modified residue" description="Phosphoserine" evidence="2">
    <location>
        <position position="1057"/>
    </location>
</feature>
<feature type="glycosylation site" description="O-linked (GlcNAc) serine" evidence="1">
    <location>
        <position position="526"/>
    </location>
</feature>
<dbReference type="EMBL" id="AF322375">
    <property type="protein sequence ID" value="AAK11317.1"/>
    <property type="molecule type" value="mRNA"/>
</dbReference>
<dbReference type="CCDS" id="CCDS37034.1"/>
<dbReference type="RefSeq" id="NP_573490.3">
    <property type="nucleotide sequence ID" value="NM_133227.3"/>
</dbReference>
<dbReference type="SMR" id="Q99P88"/>
<dbReference type="BioGRID" id="228424">
    <property type="interactions" value="32"/>
</dbReference>
<dbReference type="ComplexPortal" id="CPX-4474">
    <property type="entry name" value="Nuclear pore complex"/>
</dbReference>
<dbReference type="FunCoup" id="Q99P88">
    <property type="interactions" value="4465"/>
</dbReference>
<dbReference type="IntAct" id="Q99P88">
    <property type="interactions" value="24"/>
</dbReference>
<dbReference type="MINT" id="Q99P88"/>
<dbReference type="STRING" id="10090.ENSMUSP00000128819"/>
<dbReference type="CarbonylDB" id="Q99P88"/>
<dbReference type="GlyCosmos" id="Q99P88">
    <property type="glycosylation" value="1 site, No reported glycans"/>
</dbReference>
<dbReference type="GlyGen" id="Q99P88">
    <property type="glycosylation" value="5 sites, 1 N-linked glycan (1 site), 1 O-linked glycan (1 site)"/>
</dbReference>
<dbReference type="iPTMnet" id="Q99P88"/>
<dbReference type="PhosphoSitePlus" id="Q99P88"/>
<dbReference type="SwissPalm" id="Q99P88"/>
<dbReference type="jPOST" id="Q99P88"/>
<dbReference type="PaxDb" id="10090-ENSMUSP00000128819"/>
<dbReference type="ProteomicsDB" id="287841"/>
<dbReference type="Pumba" id="Q99P88"/>
<dbReference type="Antibodypedia" id="22985">
    <property type="antibodies" value="160 antibodies from 31 providers"/>
</dbReference>
<dbReference type="DNASU" id="170762"/>
<dbReference type="Ensembl" id="ENSMUST00000163765.3">
    <property type="protein sequence ID" value="ENSMUSP00000128819.2"/>
    <property type="gene ID" value="ENSMUSG00000022142.9"/>
</dbReference>
<dbReference type="GeneID" id="170762"/>
<dbReference type="KEGG" id="mmu:170762"/>
<dbReference type="UCSC" id="uc007vei.1">
    <property type="organism name" value="mouse"/>
</dbReference>
<dbReference type="AGR" id="MGI:2181182"/>
<dbReference type="CTD" id="9631"/>
<dbReference type="MGI" id="MGI:2181182">
    <property type="gene designation" value="Nup155"/>
</dbReference>
<dbReference type="VEuPathDB" id="HostDB:ENSMUSG00000022142"/>
<dbReference type="eggNOG" id="KOG1900">
    <property type="taxonomic scope" value="Eukaryota"/>
</dbReference>
<dbReference type="GeneTree" id="ENSGT00390000016532"/>
<dbReference type="HOGENOM" id="CLU_000429_0_0_1"/>
<dbReference type="InParanoid" id="Q99P88"/>
<dbReference type="OMA" id="SWAPFQK"/>
<dbReference type="OrthoDB" id="338970at2759"/>
<dbReference type="PhylomeDB" id="Q99P88"/>
<dbReference type="TreeFam" id="TF105951"/>
<dbReference type="Reactome" id="R-MMU-159227">
    <property type="pathway name" value="Transport of the SLBP independent Mature mRNA"/>
</dbReference>
<dbReference type="Reactome" id="R-MMU-159230">
    <property type="pathway name" value="Transport of the SLBP Dependant Mature mRNA"/>
</dbReference>
<dbReference type="Reactome" id="R-MMU-159231">
    <property type="pathway name" value="Transport of Mature mRNA Derived from an Intronless Transcript"/>
</dbReference>
<dbReference type="Reactome" id="R-MMU-159236">
    <property type="pathway name" value="Transport of Mature mRNA derived from an Intron-Containing Transcript"/>
</dbReference>
<dbReference type="Reactome" id="R-MMU-170822">
    <property type="pathway name" value="Regulation of Glucokinase by Glucokinase Regulatory Protein"/>
</dbReference>
<dbReference type="Reactome" id="R-MMU-191859">
    <property type="pathway name" value="snRNP Assembly"/>
</dbReference>
<dbReference type="Reactome" id="R-MMU-3108214">
    <property type="pathway name" value="SUMOylation of DNA damage response and repair proteins"/>
</dbReference>
<dbReference type="Reactome" id="R-MMU-3232142">
    <property type="pathway name" value="SUMOylation of ubiquitinylation proteins"/>
</dbReference>
<dbReference type="Reactome" id="R-MMU-3301854">
    <property type="pathway name" value="Nuclear Pore Complex (NPC) Disassembly"/>
</dbReference>
<dbReference type="Reactome" id="R-MMU-3371453">
    <property type="pathway name" value="Regulation of HSF1-mediated heat shock response"/>
</dbReference>
<dbReference type="Reactome" id="R-MMU-4085377">
    <property type="pathway name" value="SUMOylation of SUMOylation proteins"/>
</dbReference>
<dbReference type="Reactome" id="R-MMU-4551638">
    <property type="pathway name" value="SUMOylation of chromatin organization proteins"/>
</dbReference>
<dbReference type="Reactome" id="R-MMU-4570464">
    <property type="pathway name" value="SUMOylation of RNA binding proteins"/>
</dbReference>
<dbReference type="Reactome" id="R-MMU-4615885">
    <property type="pathway name" value="SUMOylation of DNA replication proteins"/>
</dbReference>
<dbReference type="Reactome" id="R-MMU-5578749">
    <property type="pathway name" value="Transcriptional regulation by small RNAs"/>
</dbReference>
<dbReference type="Reactome" id="R-MMU-9615933">
    <property type="pathway name" value="Postmitotic nuclear pore complex (NPC) reformation"/>
</dbReference>
<dbReference type="BioGRID-ORCS" id="170762">
    <property type="hits" value="22 hits in 81 CRISPR screens"/>
</dbReference>
<dbReference type="ChiTaRS" id="Nup155">
    <property type="organism name" value="mouse"/>
</dbReference>
<dbReference type="PRO" id="PR:Q99P88"/>
<dbReference type="Proteomes" id="UP000000589">
    <property type="component" value="Chromosome 15"/>
</dbReference>
<dbReference type="RNAct" id="Q99P88">
    <property type="molecule type" value="protein"/>
</dbReference>
<dbReference type="Bgee" id="ENSMUSG00000022142">
    <property type="expression patterns" value="Expressed in indifferent gonad and 249 other cell types or tissues"/>
</dbReference>
<dbReference type="ExpressionAtlas" id="Q99P88">
    <property type="expression patterns" value="baseline and differential"/>
</dbReference>
<dbReference type="GO" id="GO:0005635">
    <property type="term" value="C:nuclear envelope"/>
    <property type="evidence" value="ECO:0000314"/>
    <property type="project" value="MGI"/>
</dbReference>
<dbReference type="GO" id="GO:0031965">
    <property type="term" value="C:nuclear membrane"/>
    <property type="evidence" value="ECO:0007669"/>
    <property type="project" value="UniProtKB-SubCell"/>
</dbReference>
<dbReference type="GO" id="GO:0005643">
    <property type="term" value="C:nuclear pore"/>
    <property type="evidence" value="ECO:0000303"/>
    <property type="project" value="ComplexPortal"/>
</dbReference>
<dbReference type="GO" id="GO:0017056">
    <property type="term" value="F:structural constituent of nuclear pore"/>
    <property type="evidence" value="ECO:0007669"/>
    <property type="project" value="InterPro"/>
</dbReference>
<dbReference type="GO" id="GO:0086014">
    <property type="term" value="P:atrial cardiac muscle cell action potential"/>
    <property type="evidence" value="ECO:0000315"/>
    <property type="project" value="MGI"/>
</dbReference>
<dbReference type="GO" id="GO:0035196">
    <property type="term" value="P:miRNA processing"/>
    <property type="evidence" value="ECO:0000315"/>
    <property type="project" value="MGI"/>
</dbReference>
<dbReference type="GO" id="GO:0006406">
    <property type="term" value="P:mRNA export from nucleus"/>
    <property type="evidence" value="ECO:0000315"/>
    <property type="project" value="MGI"/>
</dbReference>
<dbReference type="GO" id="GO:0006998">
    <property type="term" value="P:nuclear envelope organization"/>
    <property type="evidence" value="ECO:0000266"/>
    <property type="project" value="MGI"/>
</dbReference>
<dbReference type="GO" id="GO:0006913">
    <property type="term" value="P:nucleocytoplasmic transport"/>
    <property type="evidence" value="ECO:0000303"/>
    <property type="project" value="ComplexPortal"/>
</dbReference>
<dbReference type="GO" id="GO:0006606">
    <property type="term" value="P:protein import into nucleus"/>
    <property type="evidence" value="ECO:0000315"/>
    <property type="project" value="MGI"/>
</dbReference>
<dbReference type="GO" id="GO:0034504">
    <property type="term" value="P:protein localization to nucleus"/>
    <property type="evidence" value="ECO:0000315"/>
    <property type="project" value="MGI"/>
</dbReference>
<dbReference type="FunFam" id="1.25.40.450:FF:000001">
    <property type="entry name" value="Nuclear pore complex protein"/>
    <property type="match status" value="1"/>
</dbReference>
<dbReference type="FunFam" id="1.20.120.1880:FF:000001">
    <property type="entry name" value="Nuclear pore complex protein Nup155"/>
    <property type="match status" value="1"/>
</dbReference>
<dbReference type="FunFam" id="1.25.40.440:FF:000001">
    <property type="entry name" value="Nuclear pore complex subunit"/>
    <property type="match status" value="1"/>
</dbReference>
<dbReference type="Gene3D" id="1.20.58.1780">
    <property type="match status" value="1"/>
</dbReference>
<dbReference type="Gene3D" id="1.20.120.1880">
    <property type="entry name" value="Nucleoporin, helical C-terminal domain"/>
    <property type="match status" value="1"/>
</dbReference>
<dbReference type="Gene3D" id="1.25.40.440">
    <property type="entry name" value="Nucleoporin, helical domain, central subdomain"/>
    <property type="match status" value="1"/>
</dbReference>
<dbReference type="Gene3D" id="1.25.40.450">
    <property type="entry name" value="Nucleoporin, helical domain, N-terminal subdomain"/>
    <property type="match status" value="1"/>
</dbReference>
<dbReference type="InterPro" id="IPR007187">
    <property type="entry name" value="Nucleoporin_Nup133/Nup155_C"/>
</dbReference>
<dbReference type="InterPro" id="IPR014908">
    <property type="entry name" value="Nucleoporin_Nup133/Nup155_N"/>
</dbReference>
<dbReference type="InterPro" id="IPR004870">
    <property type="entry name" value="Nucleoporin_Nup155"/>
</dbReference>
<dbReference type="InterPro" id="IPR042533">
    <property type="entry name" value="Nucleoporin_Nup155_C_1"/>
</dbReference>
<dbReference type="InterPro" id="IPR042537">
    <property type="entry name" value="Nucleoporin_Nup155_C_2"/>
</dbReference>
<dbReference type="InterPro" id="IPR042538">
    <property type="entry name" value="Nucleoporin_Nup155_C_3"/>
</dbReference>
<dbReference type="PANTHER" id="PTHR10350">
    <property type="entry name" value="NUCLEAR PORE COMPLEX PROTEIN NUP155"/>
    <property type="match status" value="1"/>
</dbReference>
<dbReference type="PANTHER" id="PTHR10350:SF6">
    <property type="entry name" value="NUCLEAR PORE COMPLEX PROTEIN NUP155"/>
    <property type="match status" value="1"/>
</dbReference>
<dbReference type="Pfam" id="PF03177">
    <property type="entry name" value="Nucleoporin_C"/>
    <property type="match status" value="1"/>
</dbReference>
<dbReference type="Pfam" id="PF08801">
    <property type="entry name" value="Nucleoporin_N"/>
    <property type="match status" value="1"/>
</dbReference>
<protein>
    <recommendedName>
        <fullName>Nuclear pore complex protein Nup155</fullName>
    </recommendedName>
    <alternativeName>
        <fullName>155 kDa nucleoporin</fullName>
    </alternativeName>
    <alternativeName>
        <fullName>Nucleoporin Nup155</fullName>
    </alternativeName>
</protein>
<sequence>MPSVLGSMMVASTSAAASLQEALENAGRLIDRQLQEDRMYPDLSELLMVSAPNSPTVSGMSDMDYPLQGPGLLSVPSLPEISTIRRVPLPPELVEQFGHMQCNCMMGVFPPISRAWLTIDSDIFMWNYEDGGDLAYFDGLSETILAVGLVKPKAGIFQPHVRHLLVLATPVDIVILGLSYANVQTGSGILNDSMCGGMQLLPDPLYSLPTDNTYLLTITSTDNGRIFLAGKDGCLYEVAYQAEAGWFSQRCRKINHSKSSLSFLVPSLLQFTFSEDDPIVQIEIDNSRNILYTRSEKGVIQVYDLGHDGQGMSRVASVSQNAIVSAAGNIARTIDRSVFKPIVQIAVIESSESLDCQLLAVTHAGVRLYFSTCPFRQPLARPNTLTLVHVRLPPGFSASSTVEKPSKVHKALYSKGILLMTASENEDNDILWCVNHDTFPFQKPMMETQMTTRVDGHSWALSAIDELKVDKIITPLNKDHIPITDSPVVVQQHMLPPKKFVLLSAQGSLMFHKLRPVDQLRHLLVSNVGGDGEEIERFFKLHQEDQACATCLILACSTAACDREVSAWATRAFFRYGGEAQMRFPATLPTPSNVGPILGSPMYSSSPVPSGSPYPNPSSLGTPSHGAQPPTMSTPMCAVGSPAMQAASMSGLTGPEIVYSGKHNGICIYFSRIMGNIWDASLVVERVFKSSNREITAIESSVPVQLLESVLQELKGLQEFLDRNSQFSGGPLGNPNTTARVQQRLVGFMRPENGNTQQMQQELQRKFQEAQLSEKISLQAIQQLVRKSYQALALWKLLCEHQFSVIVGELQKEFQEQLKITTFKDLVIRDKEVTGALIASLINCYIRDNAAVDGISLHLQDTCPLLYSTDDAVCSKANELLQRSRQVQSKTERERMLRESLKEYQKISNQVDLPSVCAQYRQVRFYEGVVELSLTAAEKKDPQGLGLHFYKHGEPEEDVVGLQTFQERLNSYKCITDTLQELVNQSKAAPQSPSVPKKPGPPVLSSDPNMLSNEEAGHHFEQMLKLAQRSKDELFSIALYNWLIQADLADKLLQIASPFLEPHLVRMARVDQNRVRYMDLLWRYYEKNRSFSSAARVLSKLADMHSTEISLQQRLEYIARAILSAKSSTAISSIAADGEFLHELEEKMEVARIQLQIQETLQRQYSHHSSVQDAISQLDSELMDITKLYGEFADPFKLAECKLAVIHCAGYSDPILVHTLWQDIIEKELNDSVALSSSDRMHALSLKLVLLGKIYAGTPRFFPLDFIVQFLEQQVCTLNWDVGFVIQTMNEIGVPLPRLLEVYDQLFKSRDPFWNRVKSPLHLLDCIHVLLTRYVENPSLVLNCERRRFTNLCLDAVCGYLVELQSMSSSVAVQAITGNFKSLQAKLERLH</sequence>